<name>RL31B_STRP8</name>
<gene>
    <name evidence="1" type="primary">rpmE2</name>
    <name type="synonym">rl31</name>
    <name type="synonym">rpmE</name>
    <name type="ordered locus">spyM18_0785</name>
</gene>
<protein>
    <recommendedName>
        <fullName evidence="1">Large ribosomal subunit protein bL31B</fullName>
    </recommendedName>
    <alternativeName>
        <fullName evidence="2">50S ribosomal protein L31 type B</fullName>
    </alternativeName>
</protein>
<sequence>MRKDIHPDYRPVVFLDTTTGYQFLSGSTKASKETVEFEGETYPLIRVEISSDSHPFYTGRQKFTQADGRVDRFNKKYGLKDANAAK</sequence>
<organism>
    <name type="scientific">Streptococcus pyogenes serotype M18 (strain MGAS8232)</name>
    <dbReference type="NCBI Taxonomy" id="186103"/>
    <lineage>
        <taxon>Bacteria</taxon>
        <taxon>Bacillati</taxon>
        <taxon>Bacillota</taxon>
        <taxon>Bacilli</taxon>
        <taxon>Lactobacillales</taxon>
        <taxon>Streptococcaceae</taxon>
        <taxon>Streptococcus</taxon>
    </lineage>
</organism>
<keyword id="KW-0687">Ribonucleoprotein</keyword>
<keyword id="KW-0689">Ribosomal protein</keyword>
<proteinExistence type="inferred from homology"/>
<dbReference type="EMBL" id="AE009949">
    <property type="protein sequence ID" value="AAL97451.1"/>
    <property type="molecule type" value="Genomic_DNA"/>
</dbReference>
<dbReference type="RefSeq" id="WP_002985307.1">
    <property type="nucleotide sequence ID" value="NC_003485.1"/>
</dbReference>
<dbReference type="SMR" id="P66204"/>
<dbReference type="KEGG" id="spm:spyM18_0785"/>
<dbReference type="HOGENOM" id="CLU_114306_2_1_9"/>
<dbReference type="GO" id="GO:1990904">
    <property type="term" value="C:ribonucleoprotein complex"/>
    <property type="evidence" value="ECO:0007669"/>
    <property type="project" value="UniProtKB-KW"/>
</dbReference>
<dbReference type="GO" id="GO:0005840">
    <property type="term" value="C:ribosome"/>
    <property type="evidence" value="ECO:0007669"/>
    <property type="project" value="UniProtKB-KW"/>
</dbReference>
<dbReference type="GO" id="GO:0003735">
    <property type="term" value="F:structural constituent of ribosome"/>
    <property type="evidence" value="ECO:0007669"/>
    <property type="project" value="InterPro"/>
</dbReference>
<dbReference type="GO" id="GO:0006412">
    <property type="term" value="P:translation"/>
    <property type="evidence" value="ECO:0007669"/>
    <property type="project" value="UniProtKB-UniRule"/>
</dbReference>
<dbReference type="Gene3D" id="4.10.830.30">
    <property type="entry name" value="Ribosomal protein L31"/>
    <property type="match status" value="1"/>
</dbReference>
<dbReference type="HAMAP" id="MF_00502">
    <property type="entry name" value="Ribosomal_bL31_2"/>
    <property type="match status" value="1"/>
</dbReference>
<dbReference type="InterPro" id="IPR034704">
    <property type="entry name" value="Ribosomal_bL28/bL31-like_sf"/>
</dbReference>
<dbReference type="InterPro" id="IPR002150">
    <property type="entry name" value="Ribosomal_bL31"/>
</dbReference>
<dbReference type="InterPro" id="IPR027493">
    <property type="entry name" value="Ribosomal_bL31_B"/>
</dbReference>
<dbReference type="InterPro" id="IPR042105">
    <property type="entry name" value="Ribosomal_bL31_sf"/>
</dbReference>
<dbReference type="NCBIfam" id="TIGR00105">
    <property type="entry name" value="L31"/>
    <property type="match status" value="1"/>
</dbReference>
<dbReference type="NCBIfam" id="NF002462">
    <property type="entry name" value="PRK01678.1"/>
    <property type="match status" value="1"/>
</dbReference>
<dbReference type="PANTHER" id="PTHR33280">
    <property type="entry name" value="50S RIBOSOMAL PROTEIN L31, CHLOROPLASTIC"/>
    <property type="match status" value="1"/>
</dbReference>
<dbReference type="PANTHER" id="PTHR33280:SF1">
    <property type="entry name" value="LARGE RIBOSOMAL SUBUNIT PROTEIN BL31C"/>
    <property type="match status" value="1"/>
</dbReference>
<dbReference type="Pfam" id="PF01197">
    <property type="entry name" value="Ribosomal_L31"/>
    <property type="match status" value="1"/>
</dbReference>
<dbReference type="PRINTS" id="PR01249">
    <property type="entry name" value="RIBOSOMALL31"/>
</dbReference>
<dbReference type="SUPFAM" id="SSF143800">
    <property type="entry name" value="L28p-like"/>
    <property type="match status" value="1"/>
</dbReference>
<dbReference type="PROSITE" id="PS01143">
    <property type="entry name" value="RIBOSOMAL_L31"/>
    <property type="match status" value="1"/>
</dbReference>
<reference key="1">
    <citation type="journal article" date="2002" name="Proc. Natl. Acad. Sci. U.S.A.">
        <title>Genome sequence and comparative microarray analysis of serotype M18 group A Streptococcus strains associated with acute rheumatic fever outbreaks.</title>
        <authorList>
            <person name="Smoot J.C."/>
            <person name="Barbian K.D."/>
            <person name="Van Gompel J.J."/>
            <person name="Smoot L.M."/>
            <person name="Chaussee M.S."/>
            <person name="Sylva G.L."/>
            <person name="Sturdevant D.E."/>
            <person name="Ricklefs S.M."/>
            <person name="Porcella S.F."/>
            <person name="Parkins L.D."/>
            <person name="Beres S.B."/>
            <person name="Campbell D.S."/>
            <person name="Smith T.M."/>
            <person name="Zhang Q."/>
            <person name="Kapur V."/>
            <person name="Daly J.A."/>
            <person name="Veasy L.G."/>
            <person name="Musser J.M."/>
        </authorList>
    </citation>
    <scope>NUCLEOTIDE SEQUENCE [LARGE SCALE GENOMIC DNA]</scope>
    <source>
        <strain>MGAS8232</strain>
    </source>
</reference>
<evidence type="ECO:0000255" key="1">
    <source>
        <dbReference type="HAMAP-Rule" id="MF_00502"/>
    </source>
</evidence>
<evidence type="ECO:0000305" key="2"/>
<feature type="chain" id="PRO_0000173275" description="Large ribosomal subunit protein bL31B">
    <location>
        <begin position="1"/>
        <end position="86"/>
    </location>
</feature>
<accession>P66204</accession>
<accession>Q9A0L6</accession>
<comment type="subunit">
    <text evidence="1">Part of the 50S ribosomal subunit.</text>
</comment>
<comment type="similarity">
    <text evidence="1">Belongs to the bacterial ribosomal protein bL31 family. Type B subfamily.</text>
</comment>